<reference evidence="4" key="1">
    <citation type="submission" date="2008-07" db="UniProtKB">
        <authorList>
            <person name="Almagro L."/>
            <person name="Sabater Jara A.B."/>
            <person name="Pedreno M.A."/>
        </authorList>
    </citation>
    <scope>PROTEIN SEQUENCE</scope>
</reference>
<feature type="chain" id="PRO_0000363736" description="Peroxidase 9">
    <location>
        <begin position="1" status="less than"/>
        <end position="9" status="greater than"/>
    </location>
</feature>
<feature type="unsure residue" description="F or M">
    <location>
        <position position="2"/>
    </location>
</feature>
<feature type="unsure residue" description="I or L">
    <location>
        <position position="8"/>
    </location>
</feature>
<feature type="unsure residue" description="K or Q">
    <location>
        <position position="9"/>
    </location>
</feature>
<feature type="non-terminal residue">
    <location>
        <position position="1"/>
    </location>
</feature>
<feature type="non-terminal residue">
    <location>
        <position position="9"/>
    </location>
</feature>
<dbReference type="EC" id="1.11.1.7"/>
<dbReference type="GO" id="GO:0005576">
    <property type="term" value="C:extracellular region"/>
    <property type="evidence" value="ECO:0007669"/>
    <property type="project" value="UniProtKB-SubCell"/>
</dbReference>
<dbReference type="GO" id="GO:0140825">
    <property type="term" value="F:lactoperoxidase activity"/>
    <property type="evidence" value="ECO:0007669"/>
    <property type="project" value="UniProtKB-EC"/>
</dbReference>
<dbReference type="GO" id="GO:0046872">
    <property type="term" value="F:metal ion binding"/>
    <property type="evidence" value="ECO:0007669"/>
    <property type="project" value="UniProtKB-KW"/>
</dbReference>
<dbReference type="GO" id="GO:0042744">
    <property type="term" value="P:hydrogen peroxide catabolic process"/>
    <property type="evidence" value="ECO:0007669"/>
    <property type="project" value="UniProtKB-KW"/>
</dbReference>
<organism>
    <name type="scientific">Capsicum annuum</name>
    <name type="common">Capsicum pepper</name>
    <dbReference type="NCBI Taxonomy" id="4072"/>
    <lineage>
        <taxon>Eukaryota</taxon>
        <taxon>Viridiplantae</taxon>
        <taxon>Streptophyta</taxon>
        <taxon>Embryophyta</taxon>
        <taxon>Tracheophyta</taxon>
        <taxon>Spermatophyta</taxon>
        <taxon>Magnoliopsida</taxon>
        <taxon>eudicotyledons</taxon>
        <taxon>Gunneridae</taxon>
        <taxon>Pentapetalae</taxon>
        <taxon>asterids</taxon>
        <taxon>lamiids</taxon>
        <taxon>Solanales</taxon>
        <taxon>Solanaceae</taxon>
        <taxon>Solanoideae</taxon>
        <taxon>Capsiceae</taxon>
        <taxon>Capsicum</taxon>
    </lineage>
</organism>
<comment type="function">
    <text evidence="4">Removal of H(2)O(2), oxidation of toxic reductants, biosynthesis and degradation of lignin, suberization, auxin catabolism, response to environmental stresses such as wounding, pathogen attack and oxidative stress. These functions might be dependent on each isozyme/isoform in each plant tissue.</text>
</comment>
<comment type="catalytic activity">
    <reaction>
        <text>2 a phenolic donor + H2O2 = 2 a phenolic radical donor + 2 H2O</text>
        <dbReference type="Rhea" id="RHEA:56136"/>
        <dbReference type="ChEBI" id="CHEBI:15377"/>
        <dbReference type="ChEBI" id="CHEBI:16240"/>
        <dbReference type="ChEBI" id="CHEBI:139520"/>
        <dbReference type="ChEBI" id="CHEBI:139521"/>
        <dbReference type="EC" id="1.11.1.7"/>
    </reaction>
</comment>
<comment type="cofactor">
    <cofactor evidence="2 3">
        <name>heme b</name>
        <dbReference type="ChEBI" id="CHEBI:60344"/>
    </cofactor>
    <text evidence="2 3">Binds 1 heme b (iron(II)-protoporphyrin IX) group per subunit.</text>
</comment>
<comment type="cofactor">
    <cofactor evidence="2 3">
        <name>Ca(2+)</name>
        <dbReference type="ChEBI" id="CHEBI:29108"/>
    </cofactor>
    <text evidence="2 3">Binds 2 calcium ions per subunit.</text>
</comment>
<comment type="subcellular location">
    <subcellularLocation>
        <location evidence="1 3">Secreted</location>
    </subcellularLocation>
</comment>
<comment type="similarity">
    <text evidence="3">Belongs to the peroxidase family. Classical plant (class III) peroxidase subfamily.</text>
</comment>
<evidence type="ECO:0000250" key="1">
    <source>
        <dbReference type="UniProtKB" id="P84516"/>
    </source>
</evidence>
<evidence type="ECO:0000250" key="2">
    <source>
        <dbReference type="UniProtKB" id="Q42578"/>
    </source>
</evidence>
<evidence type="ECO:0000255" key="3">
    <source>
        <dbReference type="PROSITE-ProRule" id="PRU00297"/>
    </source>
</evidence>
<evidence type="ECO:0000305" key="4"/>
<keyword id="KW-0106">Calcium</keyword>
<keyword id="KW-0903">Direct protein sequencing</keyword>
<keyword id="KW-0349">Heme</keyword>
<keyword id="KW-0376">Hydrogen peroxide</keyword>
<keyword id="KW-0408">Iron</keyword>
<keyword id="KW-0479">Metal-binding</keyword>
<keyword id="KW-0560">Oxidoreductase</keyword>
<keyword id="KW-0575">Peroxidase</keyword>
<keyword id="KW-0964">Secreted</keyword>
<accession>P86008</accession>
<protein>
    <recommendedName>
        <fullName evidence="2">Peroxidase 9</fullName>
        <ecNumber>1.11.1.7</ecNumber>
    </recommendedName>
</protein>
<name>PER9_CAPAN</name>
<proteinExistence type="evidence at protein level"/>
<sequence>GFDVVDNIK</sequence>